<feature type="chain" id="PRO_0000355629" description="Probable peptidyl-tRNA hydrolase 2">
    <location>
        <begin position="1"/>
        <end position="210"/>
    </location>
</feature>
<feature type="region of interest" description="Disordered" evidence="2">
    <location>
        <begin position="40"/>
        <end position="81"/>
    </location>
</feature>
<feature type="compositionally biased region" description="Basic and acidic residues" evidence="2">
    <location>
        <begin position="40"/>
        <end position="60"/>
    </location>
</feature>
<feature type="compositionally biased region" description="Acidic residues" evidence="2">
    <location>
        <begin position="61"/>
        <end position="81"/>
    </location>
</feature>
<proteinExistence type="inferred from homology"/>
<organism>
    <name type="scientific">Dictyostelium discoideum</name>
    <name type="common">Social amoeba</name>
    <dbReference type="NCBI Taxonomy" id="44689"/>
    <lineage>
        <taxon>Eukaryota</taxon>
        <taxon>Amoebozoa</taxon>
        <taxon>Evosea</taxon>
        <taxon>Eumycetozoa</taxon>
        <taxon>Dictyostelia</taxon>
        <taxon>Dictyosteliales</taxon>
        <taxon>Dictyosteliaceae</taxon>
        <taxon>Dictyostelium</taxon>
    </lineage>
</organism>
<gene>
    <name type="primary">pth2</name>
    <name type="ORF">DDB_G0277631</name>
</gene>
<protein>
    <recommendedName>
        <fullName>Probable peptidyl-tRNA hydrolase 2</fullName>
        <shortName>PTH 2</shortName>
        <ecNumber>3.1.1.29</ecNumber>
    </recommendedName>
</protein>
<sequence length="210" mass="23517">MQLNKDILLVSIISLFSGVLLGYFQAKCFKRSTITKNKEEVEQIKEIENNNQKEKEKEEKEGDDDDDDDDESESIDGDYDENDDYEIEYDEEIGDCKQVLVIRTDLGMTKGKIIAQCCHASLGARQKALKDSKKVLRQWENFGCAKITLKANSKEELVDLRNKAKELGVVSYLVLDSGHTQIPSGSATVLAVGPAPKEAVDAVTKHLKLY</sequence>
<name>PTH2_DICDI</name>
<evidence type="ECO:0000250" key="1"/>
<evidence type="ECO:0000256" key="2">
    <source>
        <dbReference type="SAM" id="MobiDB-lite"/>
    </source>
</evidence>
<evidence type="ECO:0000305" key="3"/>
<reference key="1">
    <citation type="journal article" date="2002" name="Nature">
        <title>Sequence and analysis of chromosome 2 of Dictyostelium discoideum.</title>
        <authorList>
            <person name="Gloeckner G."/>
            <person name="Eichinger L."/>
            <person name="Szafranski K."/>
            <person name="Pachebat J.A."/>
            <person name="Bankier A.T."/>
            <person name="Dear P.H."/>
            <person name="Lehmann R."/>
            <person name="Baumgart C."/>
            <person name="Parra G."/>
            <person name="Abril J.F."/>
            <person name="Guigo R."/>
            <person name="Kumpf K."/>
            <person name="Tunggal B."/>
            <person name="Cox E.C."/>
            <person name="Quail M.A."/>
            <person name="Platzer M."/>
            <person name="Rosenthal A."/>
            <person name="Noegel A.A."/>
        </authorList>
    </citation>
    <scope>NUCLEOTIDE SEQUENCE [LARGE SCALE GENOMIC DNA]</scope>
    <source>
        <strain>AX4</strain>
    </source>
</reference>
<reference key="2">
    <citation type="journal article" date="2005" name="Nature">
        <title>The genome of the social amoeba Dictyostelium discoideum.</title>
        <authorList>
            <person name="Eichinger L."/>
            <person name="Pachebat J.A."/>
            <person name="Gloeckner G."/>
            <person name="Rajandream M.A."/>
            <person name="Sucgang R."/>
            <person name="Berriman M."/>
            <person name="Song J."/>
            <person name="Olsen R."/>
            <person name="Szafranski K."/>
            <person name="Xu Q."/>
            <person name="Tunggal B."/>
            <person name="Kummerfeld S."/>
            <person name="Madera M."/>
            <person name="Konfortov B.A."/>
            <person name="Rivero F."/>
            <person name="Bankier A.T."/>
            <person name="Lehmann R."/>
            <person name="Hamlin N."/>
            <person name="Davies R."/>
            <person name="Gaudet P."/>
            <person name="Fey P."/>
            <person name="Pilcher K."/>
            <person name="Chen G."/>
            <person name="Saunders D."/>
            <person name="Sodergren E.J."/>
            <person name="Davis P."/>
            <person name="Kerhornou A."/>
            <person name="Nie X."/>
            <person name="Hall N."/>
            <person name="Anjard C."/>
            <person name="Hemphill L."/>
            <person name="Bason N."/>
            <person name="Farbrother P."/>
            <person name="Desany B."/>
            <person name="Just E."/>
            <person name="Morio T."/>
            <person name="Rost R."/>
            <person name="Churcher C.M."/>
            <person name="Cooper J."/>
            <person name="Haydock S."/>
            <person name="van Driessche N."/>
            <person name="Cronin A."/>
            <person name="Goodhead I."/>
            <person name="Muzny D.M."/>
            <person name="Mourier T."/>
            <person name="Pain A."/>
            <person name="Lu M."/>
            <person name="Harper D."/>
            <person name="Lindsay R."/>
            <person name="Hauser H."/>
            <person name="James K.D."/>
            <person name="Quiles M."/>
            <person name="Madan Babu M."/>
            <person name="Saito T."/>
            <person name="Buchrieser C."/>
            <person name="Wardroper A."/>
            <person name="Felder M."/>
            <person name="Thangavelu M."/>
            <person name="Johnson D."/>
            <person name="Knights A."/>
            <person name="Loulseged H."/>
            <person name="Mungall K.L."/>
            <person name="Oliver K."/>
            <person name="Price C."/>
            <person name="Quail M.A."/>
            <person name="Urushihara H."/>
            <person name="Hernandez J."/>
            <person name="Rabbinowitsch E."/>
            <person name="Steffen D."/>
            <person name="Sanders M."/>
            <person name="Ma J."/>
            <person name="Kohara Y."/>
            <person name="Sharp S."/>
            <person name="Simmonds M.N."/>
            <person name="Spiegler S."/>
            <person name="Tivey A."/>
            <person name="Sugano S."/>
            <person name="White B."/>
            <person name="Walker D."/>
            <person name="Woodward J.R."/>
            <person name="Winckler T."/>
            <person name="Tanaka Y."/>
            <person name="Shaulsky G."/>
            <person name="Schleicher M."/>
            <person name="Weinstock G.M."/>
            <person name="Rosenthal A."/>
            <person name="Cox E.C."/>
            <person name="Chisholm R.L."/>
            <person name="Gibbs R.A."/>
            <person name="Loomis W.F."/>
            <person name="Platzer M."/>
            <person name="Kay R.R."/>
            <person name="Williams J.G."/>
            <person name="Dear P.H."/>
            <person name="Noegel A.A."/>
            <person name="Barrell B.G."/>
            <person name="Kuspa A."/>
        </authorList>
    </citation>
    <scope>NUCLEOTIDE SEQUENCE [LARGE SCALE GENOMIC DNA]</scope>
    <source>
        <strain>AX4</strain>
    </source>
</reference>
<accession>Q54ZD0</accession>
<accession>Q86AW1</accession>
<keyword id="KW-0378">Hydrolase</keyword>
<keyword id="KW-1185">Reference proteome</keyword>
<dbReference type="EC" id="3.1.1.29"/>
<dbReference type="EMBL" id="AAFI02000020">
    <property type="protein sequence ID" value="EAL68633.1"/>
    <property type="molecule type" value="Genomic_DNA"/>
</dbReference>
<dbReference type="RefSeq" id="XP_642567.1">
    <property type="nucleotide sequence ID" value="XM_637475.1"/>
</dbReference>
<dbReference type="SMR" id="Q54ZD0"/>
<dbReference type="FunCoup" id="Q54ZD0">
    <property type="interactions" value="1049"/>
</dbReference>
<dbReference type="STRING" id="44689.Q54ZD0"/>
<dbReference type="PaxDb" id="44689-DDB0203421"/>
<dbReference type="EnsemblProtists" id="EAL68633">
    <property type="protein sequence ID" value="EAL68633"/>
    <property type="gene ID" value="DDB_G0277631"/>
</dbReference>
<dbReference type="GeneID" id="8621129"/>
<dbReference type="KEGG" id="ddi:DDB_G0277631"/>
<dbReference type="dictyBase" id="DDB_G0277631"/>
<dbReference type="VEuPathDB" id="AmoebaDB:DDB_G0277631"/>
<dbReference type="eggNOG" id="KOG3282">
    <property type="taxonomic scope" value="Eukaryota"/>
</dbReference>
<dbReference type="HOGENOM" id="CLU_073661_0_0_1"/>
<dbReference type="InParanoid" id="Q54ZD0"/>
<dbReference type="OMA" id="RMDLGMT"/>
<dbReference type="PhylomeDB" id="Q54ZD0"/>
<dbReference type="PRO" id="PR:Q54ZD0"/>
<dbReference type="Proteomes" id="UP000002195">
    <property type="component" value="Chromosome 2"/>
</dbReference>
<dbReference type="GO" id="GO:0005829">
    <property type="term" value="C:cytosol"/>
    <property type="evidence" value="ECO:0000318"/>
    <property type="project" value="GO_Central"/>
</dbReference>
<dbReference type="GO" id="GO:0004045">
    <property type="term" value="F:peptidyl-tRNA hydrolase activity"/>
    <property type="evidence" value="ECO:0000318"/>
    <property type="project" value="GO_Central"/>
</dbReference>
<dbReference type="CDD" id="cd02430">
    <property type="entry name" value="PTH2"/>
    <property type="match status" value="1"/>
</dbReference>
<dbReference type="FunFam" id="3.40.1490.10:FF:000001">
    <property type="entry name" value="Peptidyl-tRNA hydrolase 2"/>
    <property type="match status" value="1"/>
</dbReference>
<dbReference type="Gene3D" id="3.40.1490.10">
    <property type="entry name" value="Bit1"/>
    <property type="match status" value="1"/>
</dbReference>
<dbReference type="InterPro" id="IPR023476">
    <property type="entry name" value="Pep_tRNA_hydro_II_dom_sf"/>
</dbReference>
<dbReference type="InterPro" id="IPR002833">
    <property type="entry name" value="PTH2"/>
</dbReference>
<dbReference type="NCBIfam" id="TIGR00283">
    <property type="entry name" value="arch_pth2"/>
    <property type="match status" value="1"/>
</dbReference>
<dbReference type="NCBIfam" id="NF003314">
    <property type="entry name" value="PRK04322.1"/>
    <property type="match status" value="1"/>
</dbReference>
<dbReference type="PANTHER" id="PTHR12649">
    <property type="entry name" value="PEPTIDYL-TRNA HYDROLASE 2"/>
    <property type="match status" value="1"/>
</dbReference>
<dbReference type="PANTHER" id="PTHR12649:SF11">
    <property type="entry name" value="PEPTIDYL-TRNA HYDROLASE 2, MITOCHONDRIAL"/>
    <property type="match status" value="1"/>
</dbReference>
<dbReference type="Pfam" id="PF01981">
    <property type="entry name" value="PTH2"/>
    <property type="match status" value="1"/>
</dbReference>
<dbReference type="SUPFAM" id="SSF102462">
    <property type="entry name" value="Peptidyl-tRNA hydrolase II"/>
    <property type="match status" value="1"/>
</dbReference>
<comment type="function">
    <text evidence="1">The natural substrate for this enzyme may be peptidyl-tRNAs which drop off the ribosome during protein synthesis.</text>
</comment>
<comment type="catalytic activity">
    <reaction>
        <text>an N-acyl-L-alpha-aminoacyl-tRNA + H2O = an N-acyl-L-amino acid + a tRNA + H(+)</text>
        <dbReference type="Rhea" id="RHEA:54448"/>
        <dbReference type="Rhea" id="RHEA-COMP:10123"/>
        <dbReference type="Rhea" id="RHEA-COMP:13883"/>
        <dbReference type="ChEBI" id="CHEBI:15377"/>
        <dbReference type="ChEBI" id="CHEBI:15378"/>
        <dbReference type="ChEBI" id="CHEBI:59874"/>
        <dbReference type="ChEBI" id="CHEBI:78442"/>
        <dbReference type="ChEBI" id="CHEBI:138191"/>
        <dbReference type="EC" id="3.1.1.29"/>
    </reaction>
</comment>
<comment type="similarity">
    <text evidence="3">Belongs to the PTH2 family.</text>
</comment>